<dbReference type="EMBL" id="CU928145">
    <property type="protein sequence ID" value="CAU97738.1"/>
    <property type="molecule type" value="Genomic_DNA"/>
</dbReference>
<dbReference type="RefSeq" id="WP_001229265.1">
    <property type="nucleotide sequence ID" value="NZ_CP028304.1"/>
</dbReference>
<dbReference type="SMR" id="B7L6I5"/>
<dbReference type="GeneID" id="93775925"/>
<dbReference type="KEGG" id="eck:EC55989_1880"/>
<dbReference type="HOGENOM" id="CLU_105066_1_3_6"/>
<dbReference type="Proteomes" id="UP000000746">
    <property type="component" value="Chromosome"/>
</dbReference>
<dbReference type="GO" id="GO:0005829">
    <property type="term" value="C:cytosol"/>
    <property type="evidence" value="ECO:0007669"/>
    <property type="project" value="TreeGrafter"/>
</dbReference>
<dbReference type="GO" id="GO:0003677">
    <property type="term" value="F:DNA binding"/>
    <property type="evidence" value="ECO:0007669"/>
    <property type="project" value="UniProtKB-UniRule"/>
</dbReference>
<dbReference type="GO" id="GO:0030527">
    <property type="term" value="F:structural constituent of chromatin"/>
    <property type="evidence" value="ECO:0007669"/>
    <property type="project" value="InterPro"/>
</dbReference>
<dbReference type="GO" id="GO:0006310">
    <property type="term" value="P:DNA recombination"/>
    <property type="evidence" value="ECO:0007669"/>
    <property type="project" value="UniProtKB-UniRule"/>
</dbReference>
<dbReference type="GO" id="GO:0009893">
    <property type="term" value="P:positive regulation of metabolic process"/>
    <property type="evidence" value="ECO:0007669"/>
    <property type="project" value="UniProtKB-ARBA"/>
</dbReference>
<dbReference type="GO" id="GO:0006355">
    <property type="term" value="P:regulation of DNA-templated transcription"/>
    <property type="evidence" value="ECO:0007669"/>
    <property type="project" value="UniProtKB-UniRule"/>
</dbReference>
<dbReference type="GO" id="GO:0006417">
    <property type="term" value="P:regulation of translation"/>
    <property type="evidence" value="ECO:0007669"/>
    <property type="project" value="UniProtKB-UniRule"/>
</dbReference>
<dbReference type="CDD" id="cd13835">
    <property type="entry name" value="IHF_A"/>
    <property type="match status" value="1"/>
</dbReference>
<dbReference type="FunFam" id="4.10.520.10:FF:000002">
    <property type="entry name" value="Integration host factor subunit alpha"/>
    <property type="match status" value="1"/>
</dbReference>
<dbReference type="Gene3D" id="4.10.520.10">
    <property type="entry name" value="IHF-like DNA-binding proteins"/>
    <property type="match status" value="1"/>
</dbReference>
<dbReference type="HAMAP" id="MF_00380">
    <property type="entry name" value="IHF_alpha"/>
    <property type="match status" value="1"/>
</dbReference>
<dbReference type="InterPro" id="IPR000119">
    <property type="entry name" value="Hist_DNA-bd"/>
</dbReference>
<dbReference type="InterPro" id="IPR020816">
    <property type="entry name" value="Histone-like_DNA-bd_CS"/>
</dbReference>
<dbReference type="InterPro" id="IPR010992">
    <property type="entry name" value="IHF-like_DNA-bd_dom_sf"/>
</dbReference>
<dbReference type="InterPro" id="IPR005684">
    <property type="entry name" value="IHF_alpha"/>
</dbReference>
<dbReference type="NCBIfam" id="TIGR00987">
    <property type="entry name" value="himA"/>
    <property type="match status" value="1"/>
</dbReference>
<dbReference type="NCBIfam" id="NF001401">
    <property type="entry name" value="PRK00285.1"/>
    <property type="match status" value="1"/>
</dbReference>
<dbReference type="PANTHER" id="PTHR33175">
    <property type="entry name" value="DNA-BINDING PROTEIN HU"/>
    <property type="match status" value="1"/>
</dbReference>
<dbReference type="PANTHER" id="PTHR33175:SF2">
    <property type="entry name" value="INTEGRATION HOST FACTOR SUBUNIT ALPHA"/>
    <property type="match status" value="1"/>
</dbReference>
<dbReference type="Pfam" id="PF00216">
    <property type="entry name" value="Bac_DNA_binding"/>
    <property type="match status" value="1"/>
</dbReference>
<dbReference type="PRINTS" id="PR01727">
    <property type="entry name" value="DNABINDINGHU"/>
</dbReference>
<dbReference type="SMART" id="SM00411">
    <property type="entry name" value="BHL"/>
    <property type="match status" value="1"/>
</dbReference>
<dbReference type="SUPFAM" id="SSF47729">
    <property type="entry name" value="IHF-like DNA-binding proteins"/>
    <property type="match status" value="1"/>
</dbReference>
<dbReference type="PROSITE" id="PS00045">
    <property type="entry name" value="HISTONE_LIKE"/>
    <property type="match status" value="1"/>
</dbReference>
<keyword id="KW-0233">DNA recombination</keyword>
<keyword id="KW-0238">DNA-binding</keyword>
<keyword id="KW-1185">Reference proteome</keyword>
<keyword id="KW-0804">Transcription</keyword>
<keyword id="KW-0805">Transcription regulation</keyword>
<keyword id="KW-0810">Translation regulation</keyword>
<proteinExistence type="inferred from homology"/>
<evidence type="ECO:0000255" key="1">
    <source>
        <dbReference type="HAMAP-Rule" id="MF_00380"/>
    </source>
</evidence>
<evidence type="ECO:0000256" key="2">
    <source>
        <dbReference type="SAM" id="MobiDB-lite"/>
    </source>
</evidence>
<organism>
    <name type="scientific">Escherichia coli (strain 55989 / EAEC)</name>
    <dbReference type="NCBI Taxonomy" id="585055"/>
    <lineage>
        <taxon>Bacteria</taxon>
        <taxon>Pseudomonadati</taxon>
        <taxon>Pseudomonadota</taxon>
        <taxon>Gammaproteobacteria</taxon>
        <taxon>Enterobacterales</taxon>
        <taxon>Enterobacteriaceae</taxon>
        <taxon>Escherichia</taxon>
    </lineage>
</organism>
<gene>
    <name evidence="1" type="primary">ihfA</name>
    <name evidence="1" type="synonym">himA</name>
    <name type="ordered locus">EC55989_1880</name>
</gene>
<comment type="function">
    <text evidence="1">This protein is one of the two subunits of integration host factor, a specific DNA-binding protein that functions in genetic recombination as well as in transcriptional and translational control.</text>
</comment>
<comment type="subunit">
    <text evidence="1">Heterodimer of an alpha and a beta chain.</text>
</comment>
<comment type="similarity">
    <text evidence="1">Belongs to the bacterial histone-like protein family.</text>
</comment>
<accession>B7L6I5</accession>
<feature type="chain" id="PRO_1000190422" description="Integration host factor subunit alpha">
    <location>
        <begin position="1"/>
        <end position="99"/>
    </location>
</feature>
<feature type="region of interest" description="Disordered" evidence="2">
    <location>
        <begin position="49"/>
        <end position="73"/>
    </location>
</feature>
<protein>
    <recommendedName>
        <fullName evidence="1">Integration host factor subunit alpha</fullName>
        <shortName evidence="1">IHF-alpha</shortName>
    </recommendedName>
</protein>
<sequence length="99" mass="11354">MALTKAEMSEYLFDKLGLSKRDAKELVELFFEEIRRALENGEQVKLSGFGNFDLRDKNQRPGRNPKTGEDIPITARRVVTFRPGQKLKSRVENASPKDE</sequence>
<name>IHFA_ECO55</name>
<reference key="1">
    <citation type="journal article" date="2009" name="PLoS Genet.">
        <title>Organised genome dynamics in the Escherichia coli species results in highly diverse adaptive paths.</title>
        <authorList>
            <person name="Touchon M."/>
            <person name="Hoede C."/>
            <person name="Tenaillon O."/>
            <person name="Barbe V."/>
            <person name="Baeriswyl S."/>
            <person name="Bidet P."/>
            <person name="Bingen E."/>
            <person name="Bonacorsi S."/>
            <person name="Bouchier C."/>
            <person name="Bouvet O."/>
            <person name="Calteau A."/>
            <person name="Chiapello H."/>
            <person name="Clermont O."/>
            <person name="Cruveiller S."/>
            <person name="Danchin A."/>
            <person name="Diard M."/>
            <person name="Dossat C."/>
            <person name="Karoui M.E."/>
            <person name="Frapy E."/>
            <person name="Garry L."/>
            <person name="Ghigo J.M."/>
            <person name="Gilles A.M."/>
            <person name="Johnson J."/>
            <person name="Le Bouguenec C."/>
            <person name="Lescat M."/>
            <person name="Mangenot S."/>
            <person name="Martinez-Jehanne V."/>
            <person name="Matic I."/>
            <person name="Nassif X."/>
            <person name="Oztas S."/>
            <person name="Petit M.A."/>
            <person name="Pichon C."/>
            <person name="Rouy Z."/>
            <person name="Ruf C.S."/>
            <person name="Schneider D."/>
            <person name="Tourret J."/>
            <person name="Vacherie B."/>
            <person name="Vallenet D."/>
            <person name="Medigue C."/>
            <person name="Rocha E.P.C."/>
            <person name="Denamur E."/>
        </authorList>
    </citation>
    <scope>NUCLEOTIDE SEQUENCE [LARGE SCALE GENOMIC DNA]</scope>
    <source>
        <strain>55989 / EAEC</strain>
    </source>
</reference>